<protein>
    <recommendedName>
        <fullName evidence="1">DNA topoisomerase 4 subunit B</fullName>
        <ecNumber evidence="1">5.6.2.2</ecNumber>
    </recommendedName>
    <alternativeName>
        <fullName evidence="1">Topoisomerase IV subunit B</fullName>
    </alternativeName>
</protein>
<comment type="function">
    <text evidence="1">Topoisomerase IV is essential for chromosome segregation. It relaxes supercoiled DNA. Performs the decatenation events required during the replication of a circular DNA molecule.</text>
</comment>
<comment type="catalytic activity">
    <reaction evidence="1">
        <text>ATP-dependent breakage, passage and rejoining of double-stranded DNA.</text>
        <dbReference type="EC" id="5.6.2.2"/>
    </reaction>
</comment>
<comment type="cofactor">
    <cofactor evidence="1">
        <name>Mg(2+)</name>
        <dbReference type="ChEBI" id="CHEBI:18420"/>
    </cofactor>
    <cofactor evidence="1">
        <name>Mn(2+)</name>
        <dbReference type="ChEBI" id="CHEBI:29035"/>
    </cofactor>
    <cofactor evidence="1">
        <name>Ca(2+)</name>
        <dbReference type="ChEBI" id="CHEBI:29108"/>
    </cofactor>
    <text evidence="1">Binds two Mg(2+) per subunit. The magnesium ions form salt bridges with both the protein and the DNA. Can also accept other divalent metal cations, such as Mn(2+) or Ca(2+).</text>
</comment>
<comment type="subunit">
    <text evidence="1">Heterotetramer composed of ParC and ParE.</text>
</comment>
<comment type="similarity">
    <text evidence="1">Belongs to the type II topoisomerase family. ParE type 1 subfamily.</text>
</comment>
<organism>
    <name type="scientific">Rickettsia conorii (strain ATCC VR-613 / Malish 7)</name>
    <dbReference type="NCBI Taxonomy" id="272944"/>
    <lineage>
        <taxon>Bacteria</taxon>
        <taxon>Pseudomonadati</taxon>
        <taxon>Pseudomonadota</taxon>
        <taxon>Alphaproteobacteria</taxon>
        <taxon>Rickettsiales</taxon>
        <taxon>Rickettsiaceae</taxon>
        <taxon>Rickettsieae</taxon>
        <taxon>Rickettsia</taxon>
        <taxon>spotted fever group</taxon>
    </lineage>
</organism>
<name>PARE_RICCN</name>
<evidence type="ECO:0000255" key="1">
    <source>
        <dbReference type="HAMAP-Rule" id="MF_00938"/>
    </source>
</evidence>
<sequence length="662" mass="73827">MSDLFSFNKEKKNKLVDNNYSAKDIEVLEGLEPVRKRPGMYIGGTDSNAMHHLVSEVLDNAMDEAVAGFASIITITMHHDHSITIFDNGRGIPIDNHPKFPDKSALEVILTTLHSGGKFSNNVYHTAGGLHGVGISVVNALSKHLEIKVYKQGKLYSQSYSKGEKLTDLICEEASKRLRGTSINFTPDPEIFSEKLHFNPKKIYELARSKAYLYRGVTIEWACEVEVQSDIPKKALISFPNGLKDYLSSKITLDNLVIPGIFAGNIESKSDRIKLEWAICWQNNDSSAFVQSYCNTVPTPQGGTHEQGLKSAILRGLKAYGEMIGNKKAANLTIEDILETASVVLSIFIAEPSFQGQTKEKLVSNGVSKPVENIIKDHFDHFLSSDKALATNLLEHVISIAEFRISKKNEKNISRKNATQKLRLPGKLADCTRTSPEGTELFIVEGDSAGGSAKQARNRETQAVLPLWGKVLNVASSTLEKIVNNQAIQDLEIALACGSLKNYKKENLRYEKIIIMTDADVDGAHIASLLMTFFFLRMPKLVEEGHLYLAKPPLYRLTQSNKTYYAGDEEEKAKLMDKLLKASKAKIEVGRFKGLGEMMPAQLKETTMHPEKRSLLKVTLADFQNVDKIVDDLMGKKPEKRFQFIYEQALVKMDKIISELDI</sequence>
<reference key="1">
    <citation type="journal article" date="2001" name="Science">
        <title>Mechanisms of evolution in Rickettsia conorii and R. prowazekii.</title>
        <authorList>
            <person name="Ogata H."/>
            <person name="Audic S."/>
            <person name="Renesto-Audiffren P."/>
            <person name="Fournier P.-E."/>
            <person name="Barbe V."/>
            <person name="Samson D."/>
            <person name="Roux V."/>
            <person name="Cossart P."/>
            <person name="Weissenbach J."/>
            <person name="Claverie J.-M."/>
            <person name="Raoult D."/>
        </authorList>
    </citation>
    <scope>NUCLEOTIDE SEQUENCE [LARGE SCALE GENOMIC DNA]</scope>
    <source>
        <strain>ATCC VR-613 / Malish 7</strain>
    </source>
</reference>
<keyword id="KW-0067">ATP-binding</keyword>
<keyword id="KW-0238">DNA-binding</keyword>
<keyword id="KW-0413">Isomerase</keyword>
<keyword id="KW-0460">Magnesium</keyword>
<keyword id="KW-0479">Metal-binding</keyword>
<keyword id="KW-0547">Nucleotide-binding</keyword>
<keyword id="KW-0799">Topoisomerase</keyword>
<feature type="chain" id="PRO_0000273117" description="DNA topoisomerase 4 subunit B">
    <location>
        <begin position="1"/>
        <end position="662"/>
    </location>
</feature>
<feature type="domain" description="Toprim" evidence="1">
    <location>
        <begin position="439"/>
        <end position="553"/>
    </location>
</feature>
<feature type="binding site" evidence="1">
    <location>
        <position position="20"/>
    </location>
    <ligand>
        <name>ATP</name>
        <dbReference type="ChEBI" id="CHEBI:30616"/>
    </ligand>
</feature>
<feature type="binding site" evidence="1">
    <location>
        <position position="60"/>
    </location>
    <ligand>
        <name>ATP</name>
        <dbReference type="ChEBI" id="CHEBI:30616"/>
    </ligand>
</feature>
<feature type="binding site" evidence="1">
    <location>
        <position position="87"/>
    </location>
    <ligand>
        <name>ATP</name>
        <dbReference type="ChEBI" id="CHEBI:30616"/>
    </ligand>
</feature>
<feature type="binding site" evidence="1">
    <location>
        <begin position="129"/>
        <end position="135"/>
    </location>
    <ligand>
        <name>ATP</name>
        <dbReference type="ChEBI" id="CHEBI:30616"/>
    </ligand>
</feature>
<feature type="binding site" evidence="1">
    <location>
        <position position="359"/>
    </location>
    <ligand>
        <name>ATP</name>
        <dbReference type="ChEBI" id="CHEBI:30616"/>
    </ligand>
</feature>
<feature type="binding site" evidence="1">
    <location>
        <position position="445"/>
    </location>
    <ligand>
        <name>Mg(2+)</name>
        <dbReference type="ChEBI" id="CHEBI:18420"/>
        <label>1</label>
        <note>catalytic</note>
    </ligand>
</feature>
<feature type="binding site" evidence="1">
    <location>
        <position position="518"/>
    </location>
    <ligand>
        <name>Mg(2+)</name>
        <dbReference type="ChEBI" id="CHEBI:18420"/>
        <label>1</label>
        <note>catalytic</note>
    </ligand>
</feature>
<feature type="binding site" evidence="1">
    <location>
        <position position="518"/>
    </location>
    <ligand>
        <name>Mg(2+)</name>
        <dbReference type="ChEBI" id="CHEBI:18420"/>
        <label>2</label>
    </ligand>
</feature>
<feature type="binding site" evidence="1">
    <location>
        <position position="520"/>
    </location>
    <ligand>
        <name>Mg(2+)</name>
        <dbReference type="ChEBI" id="CHEBI:18420"/>
        <label>2</label>
    </ligand>
</feature>
<feature type="site" description="Interaction with DNA" evidence="1">
    <location>
        <position position="470"/>
    </location>
</feature>
<feature type="site" description="Interaction with DNA" evidence="1">
    <location>
        <position position="473"/>
    </location>
</feature>
<feature type="site" description="Interaction with DNA" evidence="1">
    <location>
        <position position="525"/>
    </location>
</feature>
<feature type="site" description="Interaction with DNA" evidence="1">
    <location>
        <position position="641"/>
    </location>
</feature>
<proteinExistence type="inferred from homology"/>
<gene>
    <name evidence="1" type="primary">parE</name>
    <name type="ordered locus">RC0309</name>
</gene>
<accession>Q92IW1</accession>
<dbReference type="EC" id="5.6.2.2" evidence="1"/>
<dbReference type="EMBL" id="AE006914">
    <property type="protein sequence ID" value="AAL02847.1"/>
    <property type="molecule type" value="Genomic_DNA"/>
</dbReference>
<dbReference type="PIR" id="E97738">
    <property type="entry name" value="E97738"/>
</dbReference>
<dbReference type="RefSeq" id="WP_010976968.1">
    <property type="nucleotide sequence ID" value="NC_003103.1"/>
</dbReference>
<dbReference type="SMR" id="Q92IW1"/>
<dbReference type="GeneID" id="928839"/>
<dbReference type="KEGG" id="rco:RC0309"/>
<dbReference type="PATRIC" id="fig|272944.4.peg.354"/>
<dbReference type="HOGENOM" id="CLU_006146_4_1_5"/>
<dbReference type="Proteomes" id="UP000000816">
    <property type="component" value="Chromosome"/>
</dbReference>
<dbReference type="GO" id="GO:0005694">
    <property type="term" value="C:chromosome"/>
    <property type="evidence" value="ECO:0007669"/>
    <property type="project" value="InterPro"/>
</dbReference>
<dbReference type="GO" id="GO:0005524">
    <property type="term" value="F:ATP binding"/>
    <property type="evidence" value="ECO:0007669"/>
    <property type="project" value="UniProtKB-UniRule"/>
</dbReference>
<dbReference type="GO" id="GO:0003677">
    <property type="term" value="F:DNA binding"/>
    <property type="evidence" value="ECO:0007669"/>
    <property type="project" value="UniProtKB-UniRule"/>
</dbReference>
<dbReference type="GO" id="GO:0003918">
    <property type="term" value="F:DNA topoisomerase type II (double strand cut, ATP-hydrolyzing) activity"/>
    <property type="evidence" value="ECO:0007669"/>
    <property type="project" value="UniProtKB-UniRule"/>
</dbReference>
<dbReference type="GO" id="GO:0046872">
    <property type="term" value="F:metal ion binding"/>
    <property type="evidence" value="ECO:0007669"/>
    <property type="project" value="UniProtKB-KW"/>
</dbReference>
<dbReference type="GO" id="GO:0007059">
    <property type="term" value="P:chromosome segregation"/>
    <property type="evidence" value="ECO:0007669"/>
    <property type="project" value="UniProtKB-UniRule"/>
</dbReference>
<dbReference type="GO" id="GO:0006265">
    <property type="term" value="P:DNA topological change"/>
    <property type="evidence" value="ECO:0007669"/>
    <property type="project" value="UniProtKB-UniRule"/>
</dbReference>
<dbReference type="CDD" id="cd16928">
    <property type="entry name" value="HATPase_GyrB-like"/>
    <property type="match status" value="1"/>
</dbReference>
<dbReference type="CDD" id="cd00822">
    <property type="entry name" value="TopoII_Trans_DNA_gyrase"/>
    <property type="match status" value="1"/>
</dbReference>
<dbReference type="FunFam" id="3.30.565.10:FF:000002">
    <property type="entry name" value="DNA gyrase subunit B"/>
    <property type="match status" value="1"/>
</dbReference>
<dbReference type="FunFam" id="3.40.50.670:FF:000006">
    <property type="entry name" value="DNA topoisomerase (ATP-hydrolyzing)"/>
    <property type="match status" value="1"/>
</dbReference>
<dbReference type="Gene3D" id="3.30.230.10">
    <property type="match status" value="1"/>
</dbReference>
<dbReference type="Gene3D" id="3.40.50.670">
    <property type="match status" value="1"/>
</dbReference>
<dbReference type="Gene3D" id="3.30.565.10">
    <property type="entry name" value="Histidine kinase-like ATPase, C-terminal domain"/>
    <property type="match status" value="1"/>
</dbReference>
<dbReference type="HAMAP" id="MF_00938">
    <property type="entry name" value="ParE_type1"/>
    <property type="match status" value="1"/>
</dbReference>
<dbReference type="InterPro" id="IPR002288">
    <property type="entry name" value="DNA_gyrase_B_C"/>
</dbReference>
<dbReference type="InterPro" id="IPR036890">
    <property type="entry name" value="HATPase_C_sf"/>
</dbReference>
<dbReference type="InterPro" id="IPR020568">
    <property type="entry name" value="Ribosomal_Su5_D2-typ_SF"/>
</dbReference>
<dbReference type="InterPro" id="IPR014721">
    <property type="entry name" value="Ribsml_uS5_D2-typ_fold_subgr"/>
</dbReference>
<dbReference type="InterPro" id="IPR001241">
    <property type="entry name" value="Topo_IIA"/>
</dbReference>
<dbReference type="InterPro" id="IPR013760">
    <property type="entry name" value="Topo_IIA-like_dom_sf"/>
</dbReference>
<dbReference type="InterPro" id="IPR000565">
    <property type="entry name" value="Topo_IIA_B"/>
</dbReference>
<dbReference type="InterPro" id="IPR013759">
    <property type="entry name" value="Topo_IIA_B_C"/>
</dbReference>
<dbReference type="InterPro" id="IPR013506">
    <property type="entry name" value="Topo_IIA_bsu_dom2"/>
</dbReference>
<dbReference type="InterPro" id="IPR018522">
    <property type="entry name" value="TopoIIA_CS"/>
</dbReference>
<dbReference type="InterPro" id="IPR005737">
    <property type="entry name" value="TopoIV_B_Gneg"/>
</dbReference>
<dbReference type="InterPro" id="IPR006171">
    <property type="entry name" value="TOPRIM_dom"/>
</dbReference>
<dbReference type="NCBIfam" id="TIGR01055">
    <property type="entry name" value="parE_Gneg"/>
    <property type="match status" value="1"/>
</dbReference>
<dbReference type="PANTHER" id="PTHR45866:SF1">
    <property type="entry name" value="DNA GYRASE SUBUNIT B, MITOCHONDRIAL"/>
    <property type="match status" value="1"/>
</dbReference>
<dbReference type="PANTHER" id="PTHR45866">
    <property type="entry name" value="DNA GYRASE/TOPOISOMERASE SUBUNIT B"/>
    <property type="match status" value="1"/>
</dbReference>
<dbReference type="Pfam" id="PF00204">
    <property type="entry name" value="DNA_gyraseB"/>
    <property type="match status" value="1"/>
</dbReference>
<dbReference type="Pfam" id="PF00986">
    <property type="entry name" value="DNA_gyraseB_C"/>
    <property type="match status" value="1"/>
</dbReference>
<dbReference type="Pfam" id="PF02518">
    <property type="entry name" value="HATPase_c"/>
    <property type="match status" value="1"/>
</dbReference>
<dbReference type="Pfam" id="PF01751">
    <property type="entry name" value="Toprim"/>
    <property type="match status" value="1"/>
</dbReference>
<dbReference type="PRINTS" id="PR01159">
    <property type="entry name" value="DNAGYRASEB"/>
</dbReference>
<dbReference type="PRINTS" id="PR00418">
    <property type="entry name" value="TPI2FAMILY"/>
</dbReference>
<dbReference type="SMART" id="SM00387">
    <property type="entry name" value="HATPase_c"/>
    <property type="match status" value="1"/>
</dbReference>
<dbReference type="SMART" id="SM00433">
    <property type="entry name" value="TOP2c"/>
    <property type="match status" value="1"/>
</dbReference>
<dbReference type="SUPFAM" id="SSF55874">
    <property type="entry name" value="ATPase domain of HSP90 chaperone/DNA topoisomerase II/histidine kinase"/>
    <property type="match status" value="1"/>
</dbReference>
<dbReference type="SUPFAM" id="SSF54211">
    <property type="entry name" value="Ribosomal protein S5 domain 2-like"/>
    <property type="match status" value="1"/>
</dbReference>
<dbReference type="SUPFAM" id="SSF56719">
    <property type="entry name" value="Type II DNA topoisomerase"/>
    <property type="match status" value="1"/>
</dbReference>
<dbReference type="PROSITE" id="PS00177">
    <property type="entry name" value="TOPOISOMERASE_II"/>
    <property type="match status" value="1"/>
</dbReference>
<dbReference type="PROSITE" id="PS50880">
    <property type="entry name" value="TOPRIM"/>
    <property type="match status" value="1"/>
</dbReference>